<gene>
    <name type="primary">FIS1</name>
    <name type="ordered locus">CAGL0M12661g</name>
</gene>
<accession>Q6FIQ1</accession>
<dbReference type="EMBL" id="CR380959">
    <property type="protein sequence ID" value="CAG62873.1"/>
    <property type="molecule type" value="Genomic_DNA"/>
</dbReference>
<dbReference type="RefSeq" id="XP_449893.1">
    <property type="nucleotide sequence ID" value="XM_449893.1"/>
</dbReference>
<dbReference type="SMR" id="Q6FIQ1"/>
<dbReference type="FunCoup" id="Q6FIQ1">
    <property type="interactions" value="733"/>
</dbReference>
<dbReference type="STRING" id="284593.Q6FIQ1"/>
<dbReference type="EnsemblFungi" id="CAGL0M12661g-T">
    <property type="protein sequence ID" value="CAGL0M12661g-T-p1"/>
    <property type="gene ID" value="CAGL0M12661g"/>
</dbReference>
<dbReference type="GeneID" id="2891444"/>
<dbReference type="KEGG" id="cgr:2891444"/>
<dbReference type="CGD" id="CAL0137193">
    <property type="gene designation" value="FIS1"/>
</dbReference>
<dbReference type="VEuPathDB" id="FungiDB:B1J91_M12661g"/>
<dbReference type="VEuPathDB" id="FungiDB:CAGL0M12661g"/>
<dbReference type="eggNOG" id="KOG3364">
    <property type="taxonomic scope" value="Eukaryota"/>
</dbReference>
<dbReference type="HOGENOM" id="CLU_104368_2_0_1"/>
<dbReference type="InParanoid" id="Q6FIQ1"/>
<dbReference type="OMA" id="QFNYAWG"/>
<dbReference type="Proteomes" id="UP000002428">
    <property type="component" value="Chromosome M"/>
</dbReference>
<dbReference type="GO" id="GO:0005741">
    <property type="term" value="C:mitochondrial outer membrane"/>
    <property type="evidence" value="ECO:0007669"/>
    <property type="project" value="UniProtKB-SubCell"/>
</dbReference>
<dbReference type="GO" id="GO:0005778">
    <property type="term" value="C:peroxisomal membrane"/>
    <property type="evidence" value="ECO:0007669"/>
    <property type="project" value="TreeGrafter"/>
</dbReference>
<dbReference type="GO" id="GO:0000422">
    <property type="term" value="P:autophagy of mitochondrion"/>
    <property type="evidence" value="ECO:0007669"/>
    <property type="project" value="TreeGrafter"/>
</dbReference>
<dbReference type="GO" id="GO:0000266">
    <property type="term" value="P:mitochondrial fission"/>
    <property type="evidence" value="ECO:0007669"/>
    <property type="project" value="EnsemblFungi"/>
</dbReference>
<dbReference type="GO" id="GO:0016559">
    <property type="term" value="P:peroxisome fission"/>
    <property type="evidence" value="ECO:0007669"/>
    <property type="project" value="EnsemblFungi"/>
</dbReference>
<dbReference type="GO" id="GO:0090141">
    <property type="term" value="P:positive regulation of mitochondrial fission"/>
    <property type="evidence" value="ECO:0007669"/>
    <property type="project" value="EnsemblFungi"/>
</dbReference>
<dbReference type="CDD" id="cd12212">
    <property type="entry name" value="Fis1"/>
    <property type="match status" value="1"/>
</dbReference>
<dbReference type="FunFam" id="1.25.40.10:FF:000481">
    <property type="entry name" value="Mitochondrial fission 1 protein"/>
    <property type="match status" value="1"/>
</dbReference>
<dbReference type="Gene3D" id="1.25.40.10">
    <property type="entry name" value="Tetratricopeptide repeat domain"/>
    <property type="match status" value="1"/>
</dbReference>
<dbReference type="InterPro" id="IPR016543">
    <property type="entry name" value="Fis1"/>
</dbReference>
<dbReference type="InterPro" id="IPR033745">
    <property type="entry name" value="Fis1_cytosol"/>
</dbReference>
<dbReference type="InterPro" id="IPR028061">
    <property type="entry name" value="Fis1_TPR_C"/>
</dbReference>
<dbReference type="InterPro" id="IPR028058">
    <property type="entry name" value="Fis1_TPR_N"/>
</dbReference>
<dbReference type="InterPro" id="IPR011990">
    <property type="entry name" value="TPR-like_helical_dom_sf"/>
</dbReference>
<dbReference type="PANTHER" id="PTHR13247:SF0">
    <property type="entry name" value="MITOCHONDRIAL FISSION 1 PROTEIN"/>
    <property type="match status" value="1"/>
</dbReference>
<dbReference type="PANTHER" id="PTHR13247">
    <property type="entry name" value="TETRATRICOPEPTIDE REPEAT PROTEIN 11 TPR REPEAT PROTEIN 11"/>
    <property type="match status" value="1"/>
</dbReference>
<dbReference type="Pfam" id="PF14853">
    <property type="entry name" value="Fis1_TPR_C"/>
    <property type="match status" value="1"/>
</dbReference>
<dbReference type="Pfam" id="PF14852">
    <property type="entry name" value="Fis1_TPR_N"/>
    <property type="match status" value="1"/>
</dbReference>
<dbReference type="PIRSF" id="PIRSF008835">
    <property type="entry name" value="TPR_repeat_11_Fis1"/>
    <property type="match status" value="1"/>
</dbReference>
<dbReference type="SUPFAM" id="SSF48452">
    <property type="entry name" value="TPR-like"/>
    <property type="match status" value="1"/>
</dbReference>
<sequence>MSKINFLPTLQDAYEPLMAAQIDILREQVVAEGGDKASVQSRFNYAWGLIKSESVDDQRLGVKILTDIYKESYQRRRECLYYLTVGCYKLKEYSMAKRYVDTLHEAEPNNKQVIALKEMVEDKIQTETIKGLAMVTGAIVGIASIAGYYMRRRK</sequence>
<keyword id="KW-0472">Membrane</keyword>
<keyword id="KW-0496">Mitochondrion</keyword>
<keyword id="KW-1000">Mitochondrion outer membrane</keyword>
<keyword id="KW-1185">Reference proteome</keyword>
<keyword id="KW-0812">Transmembrane</keyword>
<keyword id="KW-1133">Transmembrane helix</keyword>
<proteinExistence type="inferred from homology"/>
<organism>
    <name type="scientific">Candida glabrata (strain ATCC 2001 / BCRC 20586 / JCM 3761 / NBRC 0622 / NRRL Y-65 / CBS 138)</name>
    <name type="common">Yeast</name>
    <name type="synonym">Nakaseomyces glabratus</name>
    <dbReference type="NCBI Taxonomy" id="284593"/>
    <lineage>
        <taxon>Eukaryota</taxon>
        <taxon>Fungi</taxon>
        <taxon>Dikarya</taxon>
        <taxon>Ascomycota</taxon>
        <taxon>Saccharomycotina</taxon>
        <taxon>Saccharomycetes</taxon>
        <taxon>Saccharomycetales</taxon>
        <taxon>Saccharomycetaceae</taxon>
        <taxon>Nakaseomyces</taxon>
    </lineage>
</organism>
<evidence type="ECO:0000250" key="1"/>
<evidence type="ECO:0000255" key="2"/>
<evidence type="ECO:0000305" key="3"/>
<feature type="chain" id="PRO_0000256181" description="Mitochondrial fission 1 protein">
    <location>
        <begin position="1"/>
        <end position="154"/>
    </location>
</feature>
<feature type="topological domain" description="Cytoplasmic" evidence="2">
    <location>
        <begin position="1"/>
        <end position="130"/>
    </location>
</feature>
<feature type="transmembrane region" description="Helical" evidence="2">
    <location>
        <begin position="131"/>
        <end position="150"/>
    </location>
</feature>
<feature type="topological domain" description="Mitochondrial intermembrane" evidence="2">
    <location>
        <begin position="151"/>
        <end position="154"/>
    </location>
</feature>
<protein>
    <recommendedName>
        <fullName>Mitochondrial fission 1 protein</fullName>
    </recommendedName>
</protein>
<reference key="1">
    <citation type="journal article" date="2004" name="Nature">
        <title>Genome evolution in yeasts.</title>
        <authorList>
            <person name="Dujon B."/>
            <person name="Sherman D."/>
            <person name="Fischer G."/>
            <person name="Durrens P."/>
            <person name="Casaregola S."/>
            <person name="Lafontaine I."/>
            <person name="de Montigny J."/>
            <person name="Marck C."/>
            <person name="Neuveglise C."/>
            <person name="Talla E."/>
            <person name="Goffard N."/>
            <person name="Frangeul L."/>
            <person name="Aigle M."/>
            <person name="Anthouard V."/>
            <person name="Babour A."/>
            <person name="Barbe V."/>
            <person name="Barnay S."/>
            <person name="Blanchin S."/>
            <person name="Beckerich J.-M."/>
            <person name="Beyne E."/>
            <person name="Bleykasten C."/>
            <person name="Boisrame A."/>
            <person name="Boyer J."/>
            <person name="Cattolico L."/>
            <person name="Confanioleri F."/>
            <person name="de Daruvar A."/>
            <person name="Despons L."/>
            <person name="Fabre E."/>
            <person name="Fairhead C."/>
            <person name="Ferry-Dumazet H."/>
            <person name="Groppi A."/>
            <person name="Hantraye F."/>
            <person name="Hennequin C."/>
            <person name="Jauniaux N."/>
            <person name="Joyet P."/>
            <person name="Kachouri R."/>
            <person name="Kerrest A."/>
            <person name="Koszul R."/>
            <person name="Lemaire M."/>
            <person name="Lesur I."/>
            <person name="Ma L."/>
            <person name="Muller H."/>
            <person name="Nicaud J.-M."/>
            <person name="Nikolski M."/>
            <person name="Oztas S."/>
            <person name="Ozier-Kalogeropoulos O."/>
            <person name="Pellenz S."/>
            <person name="Potier S."/>
            <person name="Richard G.-F."/>
            <person name="Straub M.-L."/>
            <person name="Suleau A."/>
            <person name="Swennen D."/>
            <person name="Tekaia F."/>
            <person name="Wesolowski-Louvel M."/>
            <person name="Westhof E."/>
            <person name="Wirth B."/>
            <person name="Zeniou-Meyer M."/>
            <person name="Zivanovic Y."/>
            <person name="Bolotin-Fukuhara M."/>
            <person name="Thierry A."/>
            <person name="Bouchier C."/>
            <person name="Caudron B."/>
            <person name="Scarpelli C."/>
            <person name="Gaillardin C."/>
            <person name="Weissenbach J."/>
            <person name="Wincker P."/>
            <person name="Souciet J.-L."/>
        </authorList>
    </citation>
    <scope>NUCLEOTIDE SEQUENCE [LARGE SCALE GENOMIC DNA]</scope>
    <source>
        <strain>ATCC 2001 / BCRC 20586 / JCM 3761 / NBRC 0622 / NRRL Y-65 / CBS 138</strain>
    </source>
</reference>
<name>FIS1_CANGA</name>
<comment type="function">
    <text evidence="1">Has a role in mitochondrial fission. Has a role in outer membrane fission but not matrix separation (By similarity).</text>
</comment>
<comment type="subcellular location">
    <subcellularLocation>
        <location evidence="1">Mitochondrion outer membrane</location>
        <topology evidence="1">Single-pass membrane protein</topology>
    </subcellularLocation>
</comment>
<comment type="domain">
    <text evidence="1">The C-terminus is required for mitochondrial localization, while the N-terminus is necessary for mitochondrial fission.</text>
</comment>
<comment type="similarity">
    <text evidence="3">Belongs to the FIS1 family.</text>
</comment>